<proteinExistence type="predicted"/>
<accession>Q9LIK3</accession>
<gene>
    <name type="ordered locus">At3g22940</name>
    <name type="ORF">F5N5.12</name>
</gene>
<dbReference type="EMBL" id="AP001300">
    <property type="protein sequence ID" value="BAB03040.1"/>
    <property type="molecule type" value="Genomic_DNA"/>
</dbReference>
<dbReference type="EMBL" id="CP002686">
    <property type="protein sequence ID" value="AEE76693.1"/>
    <property type="molecule type" value="Genomic_DNA"/>
</dbReference>
<dbReference type="RefSeq" id="NP_188934.1">
    <property type="nucleotide sequence ID" value="NM_113194.1"/>
</dbReference>
<dbReference type="BioGRID" id="7198">
    <property type="interactions" value="2"/>
</dbReference>
<dbReference type="STRING" id="3702.Q9LIK3"/>
<dbReference type="PaxDb" id="3702-AT3G22940.1"/>
<dbReference type="EnsemblPlants" id="AT3G22940.1">
    <property type="protein sequence ID" value="AT3G22940.1"/>
    <property type="gene ID" value="AT3G22940"/>
</dbReference>
<dbReference type="GeneID" id="821866"/>
<dbReference type="Gramene" id="AT3G22940.1">
    <property type="protein sequence ID" value="AT3G22940.1"/>
    <property type="gene ID" value="AT3G22940"/>
</dbReference>
<dbReference type="KEGG" id="ath:AT3G22940"/>
<dbReference type="Araport" id="AT3G22940"/>
<dbReference type="TAIR" id="AT3G22940"/>
<dbReference type="HOGENOM" id="CLU_034692_0_0_1"/>
<dbReference type="InParanoid" id="Q9LIK3"/>
<dbReference type="OMA" id="EANEVLW"/>
<dbReference type="PhylomeDB" id="Q9LIK3"/>
<dbReference type="PRO" id="PR:Q9LIK3"/>
<dbReference type="Proteomes" id="UP000006548">
    <property type="component" value="Chromosome 3"/>
</dbReference>
<dbReference type="ExpressionAtlas" id="Q9LIK3">
    <property type="expression patterns" value="baseline and differential"/>
</dbReference>
<dbReference type="InterPro" id="IPR006527">
    <property type="entry name" value="F-box-assoc_dom_typ1"/>
</dbReference>
<dbReference type="InterPro" id="IPR017451">
    <property type="entry name" value="F-box-assoc_interact_dom"/>
</dbReference>
<dbReference type="InterPro" id="IPR036047">
    <property type="entry name" value="F-box-like_dom_sf"/>
</dbReference>
<dbReference type="InterPro" id="IPR001810">
    <property type="entry name" value="F-box_dom"/>
</dbReference>
<dbReference type="InterPro" id="IPR050796">
    <property type="entry name" value="SCF_F-box_component"/>
</dbReference>
<dbReference type="NCBIfam" id="TIGR01640">
    <property type="entry name" value="F_box_assoc_1"/>
    <property type="match status" value="1"/>
</dbReference>
<dbReference type="PANTHER" id="PTHR31672">
    <property type="entry name" value="BNACNNG10540D PROTEIN"/>
    <property type="match status" value="1"/>
</dbReference>
<dbReference type="PANTHER" id="PTHR31672:SF13">
    <property type="entry name" value="F-BOX PROTEIN CPR30-LIKE"/>
    <property type="match status" value="1"/>
</dbReference>
<dbReference type="Pfam" id="PF00646">
    <property type="entry name" value="F-box"/>
    <property type="match status" value="1"/>
</dbReference>
<dbReference type="Pfam" id="PF07734">
    <property type="entry name" value="FBA_1"/>
    <property type="match status" value="1"/>
</dbReference>
<dbReference type="SMART" id="SM00256">
    <property type="entry name" value="FBOX"/>
    <property type="match status" value="1"/>
</dbReference>
<dbReference type="SUPFAM" id="SSF81383">
    <property type="entry name" value="F-box domain"/>
    <property type="match status" value="1"/>
</dbReference>
<reference key="1">
    <citation type="journal article" date="2000" name="DNA Res.">
        <title>Structural analysis of Arabidopsis thaliana chromosome 3. II. Sequence features of the 4,251,695 bp regions covered by 90 P1, TAC and BAC clones.</title>
        <authorList>
            <person name="Kaneko T."/>
            <person name="Katoh T."/>
            <person name="Sato S."/>
            <person name="Nakamura Y."/>
            <person name="Asamizu E."/>
            <person name="Tabata S."/>
        </authorList>
    </citation>
    <scope>NUCLEOTIDE SEQUENCE [LARGE SCALE GENOMIC DNA]</scope>
    <source>
        <strain>cv. Columbia</strain>
    </source>
</reference>
<reference key="2">
    <citation type="journal article" date="2017" name="Plant J.">
        <title>Araport11: a complete reannotation of the Arabidopsis thaliana reference genome.</title>
        <authorList>
            <person name="Cheng C.Y."/>
            <person name="Krishnakumar V."/>
            <person name="Chan A.P."/>
            <person name="Thibaud-Nissen F."/>
            <person name="Schobel S."/>
            <person name="Town C.D."/>
        </authorList>
    </citation>
    <scope>GENOME REANNOTATION</scope>
    <source>
        <strain>cv. Columbia</strain>
    </source>
</reference>
<protein>
    <recommendedName>
        <fullName>Putative F-box protein At3g22940</fullName>
    </recommendedName>
</protein>
<name>FB178_ARATH</name>
<organism>
    <name type="scientific">Arabidopsis thaliana</name>
    <name type="common">Mouse-ear cress</name>
    <dbReference type="NCBI Taxonomy" id="3702"/>
    <lineage>
        <taxon>Eukaryota</taxon>
        <taxon>Viridiplantae</taxon>
        <taxon>Streptophyta</taxon>
        <taxon>Embryophyta</taxon>
        <taxon>Tracheophyta</taxon>
        <taxon>Spermatophyta</taxon>
        <taxon>Magnoliopsida</taxon>
        <taxon>eudicotyledons</taxon>
        <taxon>Gunneridae</taxon>
        <taxon>Pentapetalae</taxon>
        <taxon>rosids</taxon>
        <taxon>malvids</taxon>
        <taxon>Brassicales</taxon>
        <taxon>Brassicaceae</taxon>
        <taxon>Camelineae</taxon>
        <taxon>Arabidopsis</taxon>
    </lineage>
</organism>
<keyword id="KW-1185">Reference proteome</keyword>
<feature type="chain" id="PRO_0000283448" description="Putative F-box protein At3g22940">
    <location>
        <begin position="1"/>
        <end position="412"/>
    </location>
</feature>
<feature type="domain" description="F-box">
    <location>
        <begin position="1"/>
        <end position="38"/>
    </location>
</feature>
<sequence length="412" mass="47632">MPLEEILSRLPLKSTRAVRSTCKKWDSLFKNRSFISKAAAAREGESQMVVLMDHNLHLVSFFFGSDTSVEIKGKRICLNDDSDSEQVKISQVFHCEGLLLCILKDDNFSLVVWNPYWGQTRWIKPRCSFEIPQGCDMYRYAIGYDNKRRNHKILRFIDYEFHYPRDNVVLWYEIYDFESDLWTTLDVTTPHWLINCGNRGVTLKGNTYWCAKKRNSDLFLNADHIICFDFTSERFGPLLLLPFSDLDGVVTLACVREEKLAALVCHEDVVEVWITIKIEANEVLWSKFLTVNVDLGDEIPSSLTYGSFFIDEEKKVAMIFDKTLDRGDTVHIMGEAGYGGQVDLGEPVNKRRCPLVCSYVPSLVQIKKPAGFQRKQQSKLEKRQYVRNISKLRALKTQSSWTLSMSLECHQQ</sequence>